<reference key="1">
    <citation type="submission" date="2007-11" db="EMBL/GenBank/DDBJ databases">
        <authorList>
            <consortium name="The Salmonella enterica serovar Arizonae Genome Sequencing Project"/>
            <person name="McClelland M."/>
            <person name="Sanderson E.K."/>
            <person name="Porwollik S."/>
            <person name="Spieth J."/>
            <person name="Clifton W.S."/>
            <person name="Fulton R."/>
            <person name="Chunyan W."/>
            <person name="Wollam A."/>
            <person name="Shah N."/>
            <person name="Pepin K."/>
            <person name="Bhonagiri V."/>
            <person name="Nash W."/>
            <person name="Johnson M."/>
            <person name="Thiruvilangam P."/>
            <person name="Wilson R."/>
        </authorList>
    </citation>
    <scope>NUCLEOTIDE SEQUENCE [LARGE SCALE GENOMIC DNA]</scope>
    <source>
        <strain>ATCC BAA-731 / CDC346-86 / RSK2980</strain>
    </source>
</reference>
<protein>
    <recommendedName>
        <fullName evidence="1">L-seryl-tRNA(Sec) selenium transferase</fullName>
        <ecNumber evidence="1">2.9.1.1</ecNumber>
    </recommendedName>
    <alternativeName>
        <fullName evidence="1">Selenocysteine synthase</fullName>
        <shortName evidence="1">Sec synthase</shortName>
    </alternativeName>
    <alternativeName>
        <fullName evidence="1">Selenocysteinyl-tRNA(Sec) synthase</fullName>
    </alternativeName>
</protein>
<name>SELA_SALAR</name>
<evidence type="ECO:0000255" key="1">
    <source>
        <dbReference type="HAMAP-Rule" id="MF_00423"/>
    </source>
</evidence>
<comment type="function">
    <text evidence="1">Converts seryl-tRNA(Sec) to selenocysteinyl-tRNA(Sec) required for selenoprotein biosynthesis.</text>
</comment>
<comment type="catalytic activity">
    <reaction evidence="1">
        <text>L-seryl-tRNA(Sec) + selenophosphate + H(+) = L-selenocysteinyl-tRNA(Sec) + phosphate</text>
        <dbReference type="Rhea" id="RHEA:22728"/>
        <dbReference type="Rhea" id="RHEA-COMP:9742"/>
        <dbReference type="Rhea" id="RHEA-COMP:9743"/>
        <dbReference type="ChEBI" id="CHEBI:15378"/>
        <dbReference type="ChEBI" id="CHEBI:16144"/>
        <dbReference type="ChEBI" id="CHEBI:43474"/>
        <dbReference type="ChEBI" id="CHEBI:78533"/>
        <dbReference type="ChEBI" id="CHEBI:78573"/>
        <dbReference type="EC" id="2.9.1.1"/>
    </reaction>
</comment>
<comment type="cofactor">
    <cofactor evidence="1">
        <name>pyridoxal 5'-phosphate</name>
        <dbReference type="ChEBI" id="CHEBI:597326"/>
    </cofactor>
</comment>
<comment type="pathway">
    <text evidence="1">Aminoacyl-tRNA biosynthesis; selenocysteinyl-tRNA(Sec) biosynthesis; selenocysteinyl-tRNA(Sec) from L-seryl-tRNA(Sec) (bacterial route): step 1/1.</text>
</comment>
<comment type="subunit">
    <text evidence="1">Homodecamer; pentamer of dimers. Binds only one seryl-tRNA(Sec) per dimer.</text>
</comment>
<comment type="subcellular location">
    <subcellularLocation>
        <location evidence="1">Cytoplasm</location>
    </subcellularLocation>
</comment>
<comment type="similarity">
    <text evidence="1">Belongs to the SelA family.</text>
</comment>
<sequence length="463" mass="50815">MTSETRTLYSQLPAIDRLLHDSAFLSLCDQYGHTQVVDLLRRMLDDARDVIRNTQTLPDWCADWAQEANLRLEKAAQSALRPVINLTGTVLHTNLGRAWQAQEAIDAVMQAMRAPVTLEYDLDGAGRGHRDRALATLLCRITGAEDACIVNNNAAAVLLMLAATASGKEVVVSRGELVEIGGAFRIPDVMRQAGCTLHEVGTTNRTHAKDYRQAVNENTGLLMKVHTSNYSIEGFTKAVEEAELAEIGRELDIPVVADLGSGSLVDLSQYGLPKEPMPQQLIAAGVSLVSFSGDKLLGGPQAGIIVGKKAMIAQLQSHPLKRALRADKMTLAALEATLRLYLHPEALSEKLPTLRLLTRSEASIREQAQRLQARLVARYGDEFTLEVKPCLSQIGSGSLPVDRLPSAAMTFTPHDGRGSRLEALAAHWRTLPVPIIGRIYDGRLWLDMRCLEDESRFMEMMLK</sequence>
<organism>
    <name type="scientific">Salmonella arizonae (strain ATCC BAA-731 / CDC346-86 / RSK2980)</name>
    <dbReference type="NCBI Taxonomy" id="41514"/>
    <lineage>
        <taxon>Bacteria</taxon>
        <taxon>Pseudomonadati</taxon>
        <taxon>Pseudomonadota</taxon>
        <taxon>Gammaproteobacteria</taxon>
        <taxon>Enterobacterales</taxon>
        <taxon>Enterobacteriaceae</taxon>
        <taxon>Salmonella</taxon>
    </lineage>
</organism>
<gene>
    <name evidence="1" type="primary">selA</name>
    <name type="ordered locus">SARI_03965</name>
</gene>
<proteinExistence type="inferred from homology"/>
<keyword id="KW-0963">Cytoplasm</keyword>
<keyword id="KW-0648">Protein biosynthesis</keyword>
<keyword id="KW-0663">Pyridoxal phosphate</keyword>
<keyword id="KW-1185">Reference proteome</keyword>
<keyword id="KW-0711">Selenium</keyword>
<keyword id="KW-0808">Transferase</keyword>
<dbReference type="EC" id="2.9.1.1" evidence="1"/>
<dbReference type="EMBL" id="CP000880">
    <property type="protein sequence ID" value="ABX23759.1"/>
    <property type="molecule type" value="Genomic_DNA"/>
</dbReference>
<dbReference type="SMR" id="A9MLE0"/>
<dbReference type="STRING" id="41514.SARI_03965"/>
<dbReference type="KEGG" id="ses:SARI_03965"/>
<dbReference type="HOGENOM" id="CLU_038142_1_0_6"/>
<dbReference type="UniPathway" id="UPA00906">
    <property type="reaction ID" value="UER00896"/>
</dbReference>
<dbReference type="Proteomes" id="UP000002084">
    <property type="component" value="Chromosome"/>
</dbReference>
<dbReference type="GO" id="GO:0005737">
    <property type="term" value="C:cytoplasm"/>
    <property type="evidence" value="ECO:0007669"/>
    <property type="project" value="UniProtKB-SubCell"/>
</dbReference>
<dbReference type="GO" id="GO:0004125">
    <property type="term" value="F:L-seryl-tRNA(Sec) selenium transferase activity"/>
    <property type="evidence" value="ECO:0007669"/>
    <property type="project" value="UniProtKB-UniRule"/>
</dbReference>
<dbReference type="GO" id="GO:0001717">
    <property type="term" value="P:conversion of seryl-tRNAsec to selenocys-tRNAsec"/>
    <property type="evidence" value="ECO:0007669"/>
    <property type="project" value="UniProtKB-UniRule"/>
</dbReference>
<dbReference type="GO" id="GO:0001514">
    <property type="term" value="P:selenocysteine incorporation"/>
    <property type="evidence" value="ECO:0007669"/>
    <property type="project" value="UniProtKB-UniRule"/>
</dbReference>
<dbReference type="FunFam" id="3.40.640.10:FF:000028">
    <property type="entry name" value="L-seryl-tRNA(Sec) selenium transferase"/>
    <property type="match status" value="1"/>
</dbReference>
<dbReference type="FunFam" id="3.90.1150.180:FF:000001">
    <property type="entry name" value="L-seryl-tRNA(Sec) selenium transferase"/>
    <property type="match status" value="1"/>
</dbReference>
<dbReference type="Gene3D" id="3.90.1150.180">
    <property type="match status" value="1"/>
</dbReference>
<dbReference type="Gene3D" id="3.40.640.10">
    <property type="entry name" value="Type I PLP-dependent aspartate aminotransferase-like (Major domain)"/>
    <property type="match status" value="1"/>
</dbReference>
<dbReference type="HAMAP" id="MF_00423">
    <property type="entry name" value="SelA"/>
    <property type="match status" value="1"/>
</dbReference>
<dbReference type="InterPro" id="IPR015424">
    <property type="entry name" value="PyrdxlP-dep_Trfase"/>
</dbReference>
<dbReference type="InterPro" id="IPR015421">
    <property type="entry name" value="PyrdxlP-dep_Trfase_major"/>
</dbReference>
<dbReference type="InterPro" id="IPR018319">
    <property type="entry name" value="SelA-like"/>
</dbReference>
<dbReference type="InterPro" id="IPR004534">
    <property type="entry name" value="SelA_trans"/>
</dbReference>
<dbReference type="InterPro" id="IPR025862">
    <property type="entry name" value="SelA_trans_N_dom"/>
</dbReference>
<dbReference type="NCBIfam" id="TIGR00474">
    <property type="entry name" value="selA"/>
    <property type="match status" value="1"/>
</dbReference>
<dbReference type="PANTHER" id="PTHR32328">
    <property type="entry name" value="L-SERYL-TRNA(SEC) SELENIUM TRANSFERASE"/>
    <property type="match status" value="1"/>
</dbReference>
<dbReference type="PANTHER" id="PTHR32328:SF0">
    <property type="entry name" value="L-SERYL-TRNA(SEC) SELENIUM TRANSFERASE"/>
    <property type="match status" value="1"/>
</dbReference>
<dbReference type="Pfam" id="PF12390">
    <property type="entry name" value="Se-cys_synth_N"/>
    <property type="match status" value="1"/>
</dbReference>
<dbReference type="Pfam" id="PF03841">
    <property type="entry name" value="SelA"/>
    <property type="match status" value="1"/>
</dbReference>
<dbReference type="SUPFAM" id="SSF53383">
    <property type="entry name" value="PLP-dependent transferases"/>
    <property type="match status" value="1"/>
</dbReference>
<feature type="chain" id="PRO_1000080562" description="L-seryl-tRNA(Sec) selenium transferase">
    <location>
        <begin position="1"/>
        <end position="463"/>
    </location>
</feature>
<feature type="modified residue" description="N6-(pyridoxal phosphate)lysine" evidence="1">
    <location>
        <position position="295"/>
    </location>
</feature>
<accession>A9MLE0</accession>